<sequence length="369" mass="42977">MELEFFKPPLYQQRYQFVKSYVDTYKPKKVADLGCSTCSLLHTLRFWDCIKVLVGLDIDEDVLSRKKFTLTPLPAHYLEPRNTSLTINLYQGSVTQKDPALLGFDLITCIELIEHLEAEELENFREVLFGFMAPITVIISTPNAEFNILFPKCTGFRHPDHKFEWNRREFQSWATEVAKCFNYTVEITGVGEPPRDSKNVGFCSQIAVFTRNYTESEESLQRKMECKSVYKTVLHIVYPSLQEEKYLRRAVQKVALFHAYQIKANFLQQFIHREEEEEPHNTDTEHRPCMDLKLTSRWPTLPQTEQDESMEPFLQEDTLYVPLKKIFSVPKVKELCGNMDNLRTMITGEATLSNDGNAILYHIDLENSC</sequence>
<comment type="function">
    <text evidence="2">Methyltransferase that adds a 2'-O-methyl group at the 3'-end of piRNAs, a class of 24 to 30 nucleotide RNAs that are generated by a Dicer-independent mechanism and are primarily derived from transposons and other repeated sequence elements. This probably protects the 3'-end of piRNAs from uridylation activity and subsequent degradation. Stabilization of piRNAs is essential for gametogenesis.</text>
</comment>
<comment type="catalytic activity">
    <reaction evidence="2">
        <text>small RNA 3'-end nucleotide + S-adenosyl-L-methionine = small RNA 3'-end 2'-O-methylnucleotide + S-adenosyl-L-homocysteine + H(+)</text>
        <dbReference type="Rhea" id="RHEA:37887"/>
        <dbReference type="Rhea" id="RHEA-COMP:10415"/>
        <dbReference type="Rhea" id="RHEA-COMP:10416"/>
        <dbReference type="ChEBI" id="CHEBI:15378"/>
        <dbReference type="ChEBI" id="CHEBI:57856"/>
        <dbReference type="ChEBI" id="CHEBI:59789"/>
        <dbReference type="ChEBI" id="CHEBI:74896"/>
        <dbReference type="ChEBI" id="CHEBI:74898"/>
        <dbReference type="EC" id="2.1.1.386"/>
    </reaction>
</comment>
<comment type="cofactor">
    <cofactor evidence="3">
        <name>Mg(2+)</name>
        <dbReference type="ChEBI" id="CHEBI:18420"/>
    </cofactor>
    <text evidence="3">Binds 1 Mg(2+) ion per subunit.</text>
</comment>
<comment type="subcellular location">
    <subcellularLocation>
        <location evidence="1">Cytoplasm</location>
    </subcellularLocation>
    <text evidence="1">Component of the meiotic nuage, also named P granule, a germ-cell-specific organelle required to repress transposon activity during meiosis.</text>
</comment>
<comment type="similarity">
    <text evidence="4">Belongs to the methyltransferase superfamily. HEN1 family.</text>
</comment>
<protein>
    <recommendedName>
        <fullName>Small RNA 2'-O-methyltransferase</fullName>
        <ecNumber evidence="2">2.1.1.386</ecNumber>
    </recommendedName>
    <alternativeName>
        <fullName>HEN1 methyltransferase homolog 1</fullName>
    </alternativeName>
    <alternativeName>
        <fullName>piRNA methyltransferase 1</fullName>
    </alternativeName>
</protein>
<reference key="1">
    <citation type="submission" date="2007-12" db="EMBL/GenBank/DDBJ databases">
        <title>Activation of miRNA processing during Xenopus oocyte maturation.</title>
        <authorList>
            <person name="Garcia M.A."/>
            <person name="Kidwell M.A."/>
            <person name="Heintzman S.E."/>
            <person name="Wormington M."/>
        </authorList>
    </citation>
    <scope>NUCLEOTIDE SEQUENCE [MRNA]</scope>
</reference>
<keyword id="KW-0963">Cytoplasm</keyword>
<keyword id="KW-0460">Magnesium</keyword>
<keyword id="KW-0479">Metal-binding</keyword>
<keyword id="KW-0489">Methyltransferase</keyword>
<keyword id="KW-1185">Reference proteome</keyword>
<keyword id="KW-0694">RNA-binding</keyword>
<keyword id="KW-0943">RNA-mediated gene silencing</keyword>
<keyword id="KW-0949">S-adenosyl-L-methionine</keyword>
<keyword id="KW-0808">Transferase</keyword>
<dbReference type="EC" id="2.1.1.386" evidence="2"/>
<dbReference type="EMBL" id="EU338244">
    <property type="protein sequence ID" value="ACA52291.1"/>
    <property type="molecule type" value="mRNA"/>
</dbReference>
<dbReference type="RefSeq" id="NP_001153012.1">
    <property type="nucleotide sequence ID" value="NM_001159540.1"/>
</dbReference>
<dbReference type="RefSeq" id="XP_012816150.1">
    <property type="nucleotide sequence ID" value="XM_012960696.3"/>
</dbReference>
<dbReference type="RefSeq" id="XP_012816151.1">
    <property type="nucleotide sequence ID" value="XM_012960697.3"/>
</dbReference>
<dbReference type="RefSeq" id="XP_012816152.1">
    <property type="nucleotide sequence ID" value="XM_012960698.2"/>
</dbReference>
<dbReference type="SMR" id="C0IN03"/>
<dbReference type="FunCoup" id="C0IN03">
    <property type="interactions" value="498"/>
</dbReference>
<dbReference type="STRING" id="8364.ENSXETP00000013131"/>
<dbReference type="PaxDb" id="8364-ENSXETP00000061441"/>
<dbReference type="GeneID" id="100286818"/>
<dbReference type="KEGG" id="xtr:100286818"/>
<dbReference type="AGR" id="Xenbase:XB-GENE-998999"/>
<dbReference type="CTD" id="113802"/>
<dbReference type="Xenbase" id="XB-GENE-998999">
    <property type="gene designation" value="henmt1"/>
</dbReference>
<dbReference type="eggNOG" id="KOG1045">
    <property type="taxonomic scope" value="Eukaryota"/>
</dbReference>
<dbReference type="HOGENOM" id="CLU_044646_0_0_1"/>
<dbReference type="InParanoid" id="C0IN03"/>
<dbReference type="OMA" id="HQFVVDF"/>
<dbReference type="OrthoDB" id="2154311at2759"/>
<dbReference type="PhylomeDB" id="C0IN03"/>
<dbReference type="TreeFam" id="TF315178"/>
<dbReference type="Proteomes" id="UP000008143">
    <property type="component" value="Chromosome 4"/>
</dbReference>
<dbReference type="Bgee" id="ENSXETG00000030501">
    <property type="expression patterns" value="Expressed in testis and 8 other cell types or tissues"/>
</dbReference>
<dbReference type="ExpressionAtlas" id="C0IN03">
    <property type="expression patterns" value="baseline"/>
</dbReference>
<dbReference type="GO" id="GO:0043186">
    <property type="term" value="C:P granule"/>
    <property type="evidence" value="ECO:0000250"/>
    <property type="project" value="UniProtKB"/>
</dbReference>
<dbReference type="GO" id="GO:0046872">
    <property type="term" value="F:metal ion binding"/>
    <property type="evidence" value="ECO:0007669"/>
    <property type="project" value="UniProtKB-KW"/>
</dbReference>
<dbReference type="GO" id="GO:0008171">
    <property type="term" value="F:O-methyltransferase activity"/>
    <property type="evidence" value="ECO:0000250"/>
    <property type="project" value="UniProtKB"/>
</dbReference>
<dbReference type="GO" id="GO:0003723">
    <property type="term" value="F:RNA binding"/>
    <property type="evidence" value="ECO:0007669"/>
    <property type="project" value="UniProtKB-KW"/>
</dbReference>
<dbReference type="GO" id="GO:0008173">
    <property type="term" value="F:RNA methyltransferase activity"/>
    <property type="evidence" value="ECO:0000250"/>
    <property type="project" value="UniProtKB"/>
</dbReference>
<dbReference type="GO" id="GO:0090486">
    <property type="term" value="F:small RNA 2'-O-methyltransferase activity"/>
    <property type="evidence" value="ECO:0007669"/>
    <property type="project" value="RHEA"/>
</dbReference>
<dbReference type="GO" id="GO:0034587">
    <property type="term" value="P:piRNA processing"/>
    <property type="evidence" value="ECO:0000250"/>
    <property type="project" value="UniProtKB"/>
</dbReference>
<dbReference type="GO" id="GO:0001510">
    <property type="term" value="P:RNA methylation"/>
    <property type="evidence" value="ECO:0000250"/>
    <property type="project" value="UniProtKB"/>
</dbReference>
<dbReference type="FunFam" id="3.40.50.150:FF:000124">
    <property type="entry name" value="HEN methyltransferase 1"/>
    <property type="match status" value="1"/>
</dbReference>
<dbReference type="Gene3D" id="3.40.50.150">
    <property type="entry name" value="Vaccinia Virus protein VP39"/>
    <property type="match status" value="1"/>
</dbReference>
<dbReference type="InterPro" id="IPR026610">
    <property type="entry name" value="Hen1"/>
</dbReference>
<dbReference type="InterPro" id="IPR029063">
    <property type="entry name" value="SAM-dependent_MTases_sf"/>
</dbReference>
<dbReference type="PANTHER" id="PTHR21404">
    <property type="entry name" value="HEN1"/>
    <property type="match status" value="1"/>
</dbReference>
<dbReference type="PANTHER" id="PTHR21404:SF3">
    <property type="entry name" value="SMALL RNA 2'-O-METHYLTRANSFERASE"/>
    <property type="match status" value="1"/>
</dbReference>
<dbReference type="SUPFAM" id="SSF53335">
    <property type="entry name" value="S-adenosyl-L-methionine-dependent methyltransferases"/>
    <property type="match status" value="1"/>
</dbReference>
<organism>
    <name type="scientific">Xenopus tropicalis</name>
    <name type="common">Western clawed frog</name>
    <name type="synonym">Silurana tropicalis</name>
    <dbReference type="NCBI Taxonomy" id="8364"/>
    <lineage>
        <taxon>Eukaryota</taxon>
        <taxon>Metazoa</taxon>
        <taxon>Chordata</taxon>
        <taxon>Craniata</taxon>
        <taxon>Vertebrata</taxon>
        <taxon>Euteleostomi</taxon>
        <taxon>Amphibia</taxon>
        <taxon>Batrachia</taxon>
        <taxon>Anura</taxon>
        <taxon>Pipoidea</taxon>
        <taxon>Pipidae</taxon>
        <taxon>Xenopodinae</taxon>
        <taxon>Xenopus</taxon>
        <taxon>Silurana</taxon>
    </lineage>
</organism>
<feature type="chain" id="PRO_0000406961" description="Small RNA 2'-O-methyltransferase">
    <location>
        <begin position="1"/>
        <end position="369"/>
    </location>
</feature>
<feature type="binding site" evidence="3">
    <location>
        <position position="39"/>
    </location>
    <ligand>
        <name>S-adenosyl-L-methionine</name>
        <dbReference type="ChEBI" id="CHEBI:59789"/>
    </ligand>
</feature>
<feature type="binding site" evidence="3">
    <location>
        <position position="57"/>
    </location>
    <ligand>
        <name>S-adenosyl-L-methionine</name>
        <dbReference type="ChEBI" id="CHEBI:59789"/>
    </ligand>
</feature>
<feature type="binding site" evidence="3">
    <location>
        <position position="93"/>
    </location>
    <ligand>
        <name>S-adenosyl-L-methionine</name>
        <dbReference type="ChEBI" id="CHEBI:59789"/>
    </ligand>
</feature>
<feature type="binding site" evidence="3">
    <location>
        <position position="111"/>
    </location>
    <ligand>
        <name>Mg(2+)</name>
        <dbReference type="ChEBI" id="CHEBI:18420"/>
    </ligand>
</feature>
<feature type="binding site" evidence="3">
    <location>
        <position position="114"/>
    </location>
    <ligand>
        <name>Mg(2+)</name>
        <dbReference type="ChEBI" id="CHEBI:18420"/>
    </ligand>
</feature>
<feature type="binding site" evidence="3">
    <location>
        <position position="115"/>
    </location>
    <ligand>
        <name>Mg(2+)</name>
        <dbReference type="ChEBI" id="CHEBI:18420"/>
    </ligand>
</feature>
<feature type="binding site" evidence="3">
    <location>
        <position position="161"/>
    </location>
    <ligand>
        <name>Mg(2+)</name>
        <dbReference type="ChEBI" id="CHEBI:18420"/>
    </ligand>
</feature>
<name>HENMT_XENTR</name>
<gene>
    <name type="primary">henmt1</name>
    <name type="synonym">pimet1</name>
</gene>
<evidence type="ECO:0000250" key="1">
    <source>
        <dbReference type="UniProtKB" id="Q568P9"/>
    </source>
</evidence>
<evidence type="ECO:0000250" key="2">
    <source>
        <dbReference type="UniProtKB" id="Q8CAE2"/>
    </source>
</evidence>
<evidence type="ECO:0000250" key="3">
    <source>
        <dbReference type="UniProtKB" id="Q9C5Q8"/>
    </source>
</evidence>
<evidence type="ECO:0000305" key="4"/>
<accession>C0IN03</accession>
<proteinExistence type="evidence at transcript level"/>